<comment type="function">
    <text evidence="2 3 4 5 6 7 8 10 11">During neurogenesis, plays an essential role in axonal guidance and outgrowth by regulating the polarization of both microtubule and actin cytoskeletons (PubMed:11493519, PubMed:1468626, PubMed:16236031, PubMed:22101643, PubMed:25358863, PubMed:30045855). Establishes the asymmetry of axonal and dendrite microtubules and the polarized sorting of neuronal proteins (PubMed:22101643). This is achieved in part by regulating the localization of kinesin-like protein unc-104 (PubMed:22101643). In neurons without a distal microtubule-organizing center (MTOC), also controls the organization of microtubules in dendrites (PubMed:30254025). During the dorso-ventral axonal guidance and outgrowth of VD neurons, required downstream of Rac GTPases ced-10 and mig-2 to inhibit growth cone filopodial protrusion mediated by the unc-6/netrin receptor unc-40-unc-5 (PubMed:25371370). Specifically, regulates growth cone filopodial protrusion polarity, and thus migration, by promoting F-actin polarization and by restricting plus-end microtubule accumulation in the growth cone (PubMed:30045855). Probably downstream of mab-20/Sema2a and mab-20 receptor plx-2, regulates the guidance of DD/VD neuron axons by modulating fln-1 interaction with F-actin which results in the remodeling of the actin cytoskeleton (PubMed:25358863). In hermaphrodites, involved in sex myoblast (SM) migration by regulating the gonad-dependent repulsion of SMs (PubMed:10993679).</text>
</comment>
<comment type="function">
    <molecule>Isoform a</molecule>
    <text evidence="6 9">In neurons, required for the polarized sorting of axonal proteins (PubMed:22101643). In PLM neuron, regulates innexin unc-9 gap junction turnover by suppressing unc-9 transport out of gap junctions (PubMed:27015090). Plays a role in locomotion and egg-laying (PubMed:22101643).</text>
</comment>
<comment type="function">
    <molecule>Isoform b</molecule>
    <text evidence="9">In PLM neuron, regulates innexin unc-9 gap junction turnover by suppressing unc-9 transport out of gap junctions.</text>
</comment>
<comment type="function">
    <molecule>Isoform c</molecule>
    <text evidence="9">In PLM neuron, regulates innexin unc-9 gap junction turnover by suppressing unc-9 transport out of gap junctions.</text>
</comment>
<comment type="subunit">
    <text evidence="5 7 9">Isoform a: Probable monomer (PubMed:16236031). Isoform b: Probable homodimer (PubMed:16236031). Isoform c: Probable homodimer (PubMed:16236031). Probable heterodimer composed of isoform b and isoform c (PubMed:16236031). Interacts with unc-14 and kinesin-1 motor complex light chain klc-1; both interactions regulate unc-33 neurite localization (PubMed:16236031). Interacts with fln-1 (via calponin-homology (CH) domains and filamin repeat 18-19) (PubMed:25358863). Isoform c: Interacts with vab-8 isoform a (PubMed:27015090).</text>
</comment>
<comment type="subcellular location">
    <subcellularLocation>
        <location evidence="5">Cell projection</location>
        <location evidence="5">Axon</location>
    </subcellularLocation>
    <subcellularLocation>
        <location evidence="5">Cell projection</location>
        <location evidence="5">Dendrite</location>
    </subcellularLocation>
</comment>
<comment type="subcellular location">
    <molecule>Isoform a</molecule>
    <subcellularLocation>
        <location evidence="6">Cell projection</location>
        <location evidence="6">Axon</location>
    </subcellularLocation>
</comment>
<comment type="alternative products">
    <event type="alternative splicing"/>
    <isoform>
        <id>Q01630-1</id>
        <name evidence="15">a</name>
        <name evidence="12">I</name>
        <name evidence="13">L</name>
        <sequence type="displayed"/>
    </isoform>
    <isoform>
        <id>Q01630-2</id>
        <name evidence="16">b</name>
        <name evidence="12">II</name>
        <name evidence="13">M</name>
        <sequence type="described" ref="VSP_001310"/>
    </isoform>
    <isoform>
        <id>Q01630-3</id>
        <name evidence="14">c</name>
        <name evidence="12">III</name>
        <name evidence="13">S</name>
        <sequence type="described" ref="VSP_001311"/>
    </isoform>
</comment>
<comment type="tissue specificity">
    <text evidence="3 5 6">Expressed in ventral cord and nerve ring (at protein level) (PubMed:16236031). Isoform a: Expressed in nerve ring (at protein level) (PubMed:16236031, PubMed:22101643). Expressed in the nervous system, two amphid socket cells and weakly in non-neuronal pharyngeal cells (PubMed:11493519).</text>
</comment>
<comment type="developmental stage">
    <text evidence="5">Expressed in L1 larval stage and in adults (at protein level) (PubMed:16236031). Isoform a: Expressed in L1 larval stage and in adults (at protein level) (PubMed:16236031).</text>
</comment>
<comment type="similarity">
    <text evidence="14">Belongs to the metallo-dependent hydrolases superfamily. Hydantoinase/dihydropyrimidinase family.</text>
</comment>
<comment type="caution">
    <text evidence="14">Lacks most of the conserved residues that are essential for binding the metal cofactor and hence for dihydropyrimidinase activity. Its enzyme activity is therefore unsure.</text>
</comment>
<organism>
    <name type="scientific">Caenorhabditis elegans</name>
    <dbReference type="NCBI Taxonomy" id="6239"/>
    <lineage>
        <taxon>Eukaryota</taxon>
        <taxon>Metazoa</taxon>
        <taxon>Ecdysozoa</taxon>
        <taxon>Nematoda</taxon>
        <taxon>Chromadorea</taxon>
        <taxon>Rhabditida</taxon>
        <taxon>Rhabditina</taxon>
        <taxon>Rhabditomorpha</taxon>
        <taxon>Rhabditoidea</taxon>
        <taxon>Rhabditidae</taxon>
        <taxon>Peloderinae</taxon>
        <taxon>Caenorhabditis</taxon>
    </lineage>
</organism>
<name>UNC33_CAEEL</name>
<reference key="1">
    <citation type="journal article" date="1992" name="Genetics">
        <title>Analysis of the Caenorhabditis elegans axonal guidance and outgrowth gene unc-33.</title>
        <authorList>
            <person name="Li W."/>
            <person name="Herman R.K."/>
            <person name="Shaw J.E."/>
        </authorList>
    </citation>
    <scope>NUCLEOTIDE SEQUENCE [GENOMIC DNA / MRNA]</scope>
    <scope>FUNCTION</scope>
    <scope>ALTERNATIVE SPLICING</scope>
    <source>
        <strain>Bristol N2</strain>
        <tissue>Embryo</tissue>
    </source>
</reference>
<reference key="2">
    <citation type="journal article" date="1998" name="Science">
        <title>Genome sequence of the nematode C. elegans: a platform for investigating biology.</title>
        <authorList>
            <consortium name="The C. elegans sequencing consortium"/>
        </authorList>
    </citation>
    <scope>NUCLEOTIDE SEQUENCE [LARGE SCALE GENOMIC DNA]</scope>
    <source>
        <strain>Bristol N2</strain>
    </source>
</reference>
<reference key="3">
    <citation type="journal article" date="2000" name="Dev. Biol.">
        <title>Mechanisms controlling sex myoblast migration in Caenorhabditis elegans hermaphrodites.</title>
        <authorList>
            <person name="Branda C.S."/>
            <person name="Stern M.J."/>
        </authorList>
    </citation>
    <scope>FUNCTION</scope>
</reference>
<reference key="4">
    <citation type="journal article" date="2001" name="Development">
        <title>A regulatory cascade of three homeobox genes, ceh-10, ttx-3 and ceh-23, controls cell fate specification of a defined interneuron class in C. elegans.</title>
        <authorList>
            <person name="Altun-Gultekin Z."/>
            <person name="Andachi Y."/>
            <person name="Tsalik E.L."/>
            <person name="Pilgrim D."/>
            <person name="Kohara Y."/>
            <person name="Hobert O."/>
        </authorList>
    </citation>
    <scope>FUNCTION</scope>
    <scope>TISSUE SPECIFICITY</scope>
    <scope>MUTAGENESIS OF ASP-389</scope>
</reference>
<reference key="5">
    <citation type="journal article" date="2005" name="J. Neurochem.">
        <title>Regulatory machinery of UNC-33 Ce-CRMP localization in neurites during neuronal development in Caenorhabditis elegans.</title>
        <authorList>
            <person name="Tsuboi D."/>
            <person name="Hikita T."/>
            <person name="Qadota H."/>
            <person name="Amano M."/>
            <person name="Kaibuchi K."/>
        </authorList>
    </citation>
    <scope>FUNCTION</scope>
    <scope>SUBUNIT</scope>
    <scope>INTERACTION WITH UNC-14 AND KLC-2</scope>
    <scope>SUBCELLULAR LOCATION</scope>
    <scope>TISSUE SPECIFICITY (ISOFORM A)</scope>
    <scope>DEVELOPMENTAL STAGE</scope>
    <scope>MUTAGENESIS OF ASP-389</scope>
</reference>
<reference key="6">
    <citation type="journal article" date="2011" name="Nat. Neurosci.">
        <title>UNC-33 (CRMP) and ankyrin organize microtubules and localize kinesin to polarize axon-dendrite sorting.</title>
        <authorList>
            <person name="Maniar T.A."/>
            <person name="Kaplan M."/>
            <person name="Wang G.J."/>
            <person name="Shen K."/>
            <person name="Wei L."/>
            <person name="Shaw J.E."/>
            <person name="Koushika S.P."/>
            <person name="Bargmann C.I."/>
        </authorList>
    </citation>
    <scope>FUNCTION (ISOFORM A)</scope>
    <scope>SUBCELLULAR LOCATION (ISOFORM A)</scope>
    <scope>TISSUE SPECIFICITY (ISOFORM A)</scope>
    <scope>MUTAGENESIS OF 255-GLU--TRP-854; ASP-389 AND GLU-663</scope>
</reference>
<reference key="7">
    <citation type="journal article" date="2014" name="Nat. Commun.">
        <title>Amino- and carboxyl-terminal domains of Filamin-A interact with CRMP1 to mediate Sema3A signalling.</title>
        <authorList>
            <person name="Nakamura F."/>
            <person name="Kumeta K."/>
            <person name="Hida T."/>
            <person name="Isono T."/>
            <person name="Nakayama Y."/>
            <person name="Kuramata-Matsuoka E."/>
            <person name="Yamashita N."/>
            <person name="Uchida Y."/>
            <person name="Ogura K."/>
            <person name="Gengyo-Ando K."/>
            <person name="Mitani S."/>
            <person name="Ogino T."/>
            <person name="Goshima Y."/>
        </authorList>
    </citation>
    <scope>FUNCTION</scope>
    <scope>INTERACTION WITH FLN-1</scope>
    <scope>MUTAGENESIS OF ASP-389</scope>
</reference>
<reference key="8">
    <citation type="journal article" date="2014" name="Development">
        <title>The UNC-6/Netrin receptors UNC-40/DCC and UNC-5 inhibit growth cone filopodial protrusion via UNC-73/Trio, Rac-like GTPases and UNC-33/CRMP.</title>
        <authorList>
            <person name="Norris A.D."/>
            <person name="Sundararajan L."/>
            <person name="Morgan D.E."/>
            <person name="Roberts Z.J."/>
            <person name="Lundquist E.A."/>
        </authorList>
    </citation>
    <scope>FUNCTION</scope>
    <scope>MUTAGENESIS OF ASP-389</scope>
</reference>
<reference key="9">
    <citation type="journal article" date="2016" name="PLoS Genet.">
        <title>Regulation of Gap Junction Dynamics by UNC-44/ankyrin and UNC-33/CRMP through VAB-8 in C. elegans Neurons.</title>
        <authorList>
            <person name="Meng L."/>
            <person name="Chen C.H."/>
            <person name="Yan D."/>
        </authorList>
    </citation>
    <scope>FUNCTION (ISOFORMS A; B AND C)</scope>
    <scope>INTERACTION WITH VAB-8</scope>
    <scope>MUTAGENESIS OF GLU-168; GLY-328 AND ASP-389</scope>
</reference>
<reference key="10">
    <citation type="journal article" date="2018" name="Genetics">
        <title>Control of Growth Cone Polarity, Microtubule Accumulation, and Protrusion by UNC-6/Netrin and Its Receptors in Caenorhabditis elegans.</title>
        <authorList>
            <person name="Gujar M.R."/>
            <person name="Sundararajan L."/>
            <person name="Stricker A."/>
            <person name="Lundquist E.A."/>
        </authorList>
    </citation>
    <scope>FUNCTION</scope>
    <scope>MUTAGENESIS OF ASP-389</scope>
</reference>
<reference key="11">
    <citation type="journal article" date="2018" name="J. Cell Sci.">
        <title>Local microtubule organization promotes cargo transport in C. elegans dendrites.</title>
        <authorList>
            <person name="Harterink M."/>
            <person name="Edwards S.L."/>
            <person name="de Haan B."/>
            <person name="Yau K.W."/>
            <person name="van den Heuvel S."/>
            <person name="Kapitein L.C."/>
            <person name="Miller K.G."/>
            <person name="Hoogenraad C.C."/>
        </authorList>
    </citation>
    <scope>FUNCTION</scope>
</reference>
<protein>
    <recommendedName>
        <fullName>Protein unc-33</fullName>
    </recommendedName>
    <alternativeName>
        <fullName evidence="14">Inactive dihydropyrimidinase unc-33</fullName>
    </alternativeName>
    <alternativeName>
        <fullName>Uncoordinated protein 33</fullName>
    </alternativeName>
</protein>
<sequence length="854" mass="90819">MFPFLAPIRSANHVEQQGTKYYVEITFLADSPYSRAPSSTGTEKSVIPTLRNLDDLETVSNKSRSSEGVNKLGSRPNSRSSAIVKKTSVSSLPTSARSEGKSSPIPVKDAIPAPARHKNKGLEMSSAMMELFGGGGSTSPAPSKRENPADAPSDRVVSNAKLSQPGPEWFEGFEQMDMTDIELPPDPNCPAEKVLRGEKSTPDFDSDWQEAKEDVLDPQSYPKSFNPAESLPGPDIGAGVDDEEEPEAEAQEMEEPQYESKVDEKDDDDNGSSSSKKGHPSEDGDSTRNGETPTDRRNSGAIEETADGESSAQSAAEKKNSGDDGNGGGGEMSILLVKNAQIVNDDAIFVADILIEDGIIQNVAPNLEAPEGAEVLDAAGKLALPAGIDVYTQVTDSSVDDLSTGCKSAIAGGTGTIVEVVRPRGAESVVSAVKRVKNQLEKSGISCHVALSVAITDFCEQEMSELVKNEGINSFVLDGVSLTDDKLLELFEHVKRLGALIRVVPENKSIVAMLEKKMLKLGVTGPEGFPQSRPESLEADRVSGVCVLGNLASCPISIVQVSSADSLAAIEKARASGALAHAEIASAAVTADGSALFSQDLRFASAHLTDVPLRRGAPDRMIGALSTQPLVVCTSGHRPVNSATRVAAKDFAIAQKGSTGAEERMAVVWERAVRSGRIDAMRFVAVTSTNAAKMFNMYPKKGRIAVGADADLVIWDASGKRVLESSRAQSSQENSMYDGLTVHSVVTATIVGGKIAYQNGEVREAPVAGGFLRLSPNSPYLFSMVGQRDKFANVERVEREASSQQQKPQQNGHHKNSGDFDRNRTKVMESSIDFGGSAANRPRNPPGGRTTGFW</sequence>
<feature type="chain" id="PRO_0000165927" description="Protein unc-33">
    <location>
        <begin position="1"/>
        <end position="854"/>
    </location>
</feature>
<feature type="region of interest" description="Disordered" evidence="1">
    <location>
        <begin position="57"/>
        <end position="114"/>
    </location>
</feature>
<feature type="region of interest" description="Disordered" evidence="1">
    <location>
        <begin position="130"/>
        <end position="327"/>
    </location>
</feature>
<feature type="region of interest" description="Disordered" evidence="1">
    <location>
        <begin position="794"/>
        <end position="854"/>
    </location>
</feature>
<feature type="compositionally biased region" description="Polar residues" evidence="1">
    <location>
        <begin position="58"/>
        <end position="68"/>
    </location>
</feature>
<feature type="compositionally biased region" description="Polar residues" evidence="1">
    <location>
        <begin position="75"/>
        <end position="97"/>
    </location>
</feature>
<feature type="compositionally biased region" description="Basic and acidic residues" evidence="1">
    <location>
        <begin position="193"/>
        <end position="202"/>
    </location>
</feature>
<feature type="compositionally biased region" description="Acidic residues" evidence="1">
    <location>
        <begin position="240"/>
        <end position="257"/>
    </location>
</feature>
<feature type="compositionally biased region" description="Basic and acidic residues" evidence="1">
    <location>
        <begin position="279"/>
        <end position="298"/>
    </location>
</feature>
<feature type="compositionally biased region" description="Polar residues" evidence="1">
    <location>
        <begin position="802"/>
        <end position="811"/>
    </location>
</feature>
<feature type="compositionally biased region" description="Basic and acidic residues" evidence="1">
    <location>
        <begin position="816"/>
        <end position="827"/>
    </location>
</feature>
<feature type="splice variant" id="VSP_001311" description="In isoform c." evidence="14">
    <location>
        <begin position="1"/>
        <end position="331"/>
    </location>
</feature>
<feature type="splice variant" id="VSP_001310" description="In isoform b." evidence="14">
    <location>
        <begin position="1"/>
        <end position="175"/>
    </location>
</feature>
<feature type="mutagenesis site" description="In yad26; in the PLM neuron axon, increases the number of unc-9 puncta close to the two original gap junctions and the length of the first gap junction, also causes mis-localization of unc-1, loss of unc-1-unc-9 co-localization and a reduction in the number of unc-9 leaving the gap junction; when associated with D-328." evidence="9">
    <original>E</original>
    <variation>K</variation>
    <location>
        <position position="168"/>
    </location>
</feature>
<feature type="mutagenesis site" description="In ky869; axonal proteins are mislocalized to dendrites." evidence="6">
    <location>
        <begin position="255"/>
        <end position="854"/>
    </location>
</feature>
<feature type="mutagenesis site" description="In yad26; in the PLM neuron axon, increases the number of unc-9 puncta close to the two original gap junctions and the length of the first gap junction, also causes mis-localization of unc-1, loss of unc-1-unc-9 co-localization and a reduction in the number of unc-9 leaving the gap junction; when associated with K-168." evidence="9">
    <original>G</original>
    <variation>D</variation>
    <location>
        <position position="328"/>
    </location>
</feature>
<feature type="mutagenesis site" description="In e204; uncoordinated. In AIY, ASI, D-type neurons, impairs axonal guidance and outgrowth and in some cases causes ectopic axonal branching. In VD neurons, increases growth cone filopodial protrusion associated with a loss of F-actin polarity and an accumulation of plus-end microtubule in the growth cone. Causes mislocalization of several axonal and dendrite proteins. In the PLM neuron axon, increases the number of unc-9 puncta close to the two original gap junctions and the length of the first gap junction. Causes unc-33 mislocalization to the perikaryon. Reduces its expression, homodimerization and heterodimerization; in isoform b. Prevents homodimerization and heterodimerization; in isoform c." evidence="3 5 6 7 8 9 10">
    <original>D</original>
    <variation>N</variation>
    <location>
        <position position="389"/>
    </location>
</feature>
<feature type="mutagenesis site" description="In ky880; axonal proteins including unc-104 and synaptic proteins are mislocalized to dendrites. Increases tubulin levels in dendrites while decreasing tubulin levels in axons." evidence="6">
    <original>E</original>
    <variation>K</variation>
    <location>
        <position position="663"/>
    </location>
</feature>
<gene>
    <name evidence="15" type="primary">unc-33</name>
    <name evidence="15" type="ORF">Y37E11C.1</name>
</gene>
<proteinExistence type="evidence at protein level"/>
<evidence type="ECO:0000256" key="1">
    <source>
        <dbReference type="SAM" id="MobiDB-lite"/>
    </source>
</evidence>
<evidence type="ECO:0000269" key="2">
    <source>
    </source>
</evidence>
<evidence type="ECO:0000269" key="3">
    <source>
    </source>
</evidence>
<evidence type="ECO:0000269" key="4">
    <source>
    </source>
</evidence>
<evidence type="ECO:0000269" key="5">
    <source>
    </source>
</evidence>
<evidence type="ECO:0000269" key="6">
    <source>
    </source>
</evidence>
<evidence type="ECO:0000269" key="7">
    <source>
    </source>
</evidence>
<evidence type="ECO:0000269" key="8">
    <source>
    </source>
</evidence>
<evidence type="ECO:0000269" key="9">
    <source>
    </source>
</evidence>
<evidence type="ECO:0000269" key="10">
    <source>
    </source>
</evidence>
<evidence type="ECO:0000269" key="11">
    <source>
    </source>
</evidence>
<evidence type="ECO:0000303" key="12">
    <source>
    </source>
</evidence>
<evidence type="ECO:0000303" key="13">
    <source>
    </source>
</evidence>
<evidence type="ECO:0000305" key="14"/>
<evidence type="ECO:0000312" key="15">
    <source>
        <dbReference type="WormBase" id="Y37E11C.1a"/>
    </source>
</evidence>
<evidence type="ECO:0000312" key="16">
    <source>
        <dbReference type="WormBase" id="Y37E11C.1b"/>
    </source>
</evidence>
<keyword id="KW-0025">Alternative splicing</keyword>
<keyword id="KW-0966">Cell projection</keyword>
<keyword id="KW-0524">Neurogenesis</keyword>
<keyword id="KW-1185">Reference proteome</keyword>
<accession>Q01630</accession>
<accession>U4PE21</accession>
<dbReference type="EMBL" id="Z14148">
    <property type="protein sequence ID" value="CAA78520.1"/>
    <property type="molecule type" value="Genomic_DNA"/>
</dbReference>
<dbReference type="EMBL" id="Z14148">
    <property type="protein sequence ID" value="CAA78521.1"/>
    <property type="molecule type" value="Genomic_DNA"/>
</dbReference>
<dbReference type="EMBL" id="Z14148">
    <property type="protein sequence ID" value="CAA78522.1"/>
    <property type="molecule type" value="Genomic_DNA"/>
</dbReference>
<dbReference type="EMBL" id="Z14146">
    <property type="protein sequence ID" value="CAA78516.1"/>
    <property type="molecule type" value="mRNA"/>
</dbReference>
<dbReference type="EMBL" id="Z14146">
    <property type="protein sequence ID" value="CAA78517.1"/>
    <property type="molecule type" value="mRNA"/>
</dbReference>
<dbReference type="EMBL" id="Z14146">
    <property type="protein sequence ID" value="CAA78518.1"/>
    <property type="molecule type" value="mRNA"/>
</dbReference>
<dbReference type="EMBL" id="BX284604">
    <property type="protein sequence ID" value="CCD64037.1"/>
    <property type="molecule type" value="Genomic_DNA"/>
</dbReference>
<dbReference type="EMBL" id="BX284604">
    <property type="protein sequence ID" value="CDH93000.1"/>
    <property type="molecule type" value="Genomic_DNA"/>
</dbReference>
<dbReference type="PIR" id="S33558">
    <property type="entry name" value="S33558"/>
</dbReference>
<dbReference type="RefSeq" id="NP_001033438.1">
    <molecule id="Q01630-1"/>
    <property type="nucleotide sequence ID" value="NM_001038349.4"/>
</dbReference>
<dbReference type="RefSeq" id="NP_001294298.1">
    <property type="nucleotide sequence ID" value="NM_001307369.1"/>
</dbReference>
<dbReference type="RefSeq" id="NP_001368210.1">
    <molecule id="Q01630-3"/>
    <property type="nucleotide sequence ID" value="NM_001380148.1"/>
</dbReference>
<dbReference type="RefSeq" id="NP_001368216.1">
    <molecule id="Q01630-2"/>
    <property type="nucleotide sequence ID" value="NM_001380147.1"/>
</dbReference>
<dbReference type="SMR" id="Q01630"/>
<dbReference type="BioGRID" id="42252">
    <property type="interactions" value="6"/>
</dbReference>
<dbReference type="FunCoup" id="Q01630">
    <property type="interactions" value="13"/>
</dbReference>
<dbReference type="STRING" id="6239.Y37E11C.1a.1"/>
<dbReference type="iPTMnet" id="Q01630"/>
<dbReference type="PaxDb" id="6239-Y37E11C.1a"/>
<dbReference type="PeptideAtlas" id="Q01630"/>
<dbReference type="EnsemblMetazoa" id="Y37E11C.1a.1">
    <molecule id="Q01630-1"/>
    <property type="protein sequence ID" value="Y37E11C.1a.1"/>
    <property type="gene ID" value="WBGene00006769"/>
</dbReference>
<dbReference type="EnsemblMetazoa" id="Y37E11C.1b.1">
    <molecule id="Q01630-2"/>
    <property type="protein sequence ID" value="Y37E11C.1b.1"/>
    <property type="gene ID" value="WBGene00006769"/>
</dbReference>
<dbReference type="GeneID" id="177112"/>
<dbReference type="KEGG" id="cel:CELE_Y37E11C.1"/>
<dbReference type="UCSC" id="Y37E11C.1">
    <molecule id="Q01630-1"/>
    <property type="organism name" value="c. elegans"/>
</dbReference>
<dbReference type="AGR" id="WB:WBGene00006769"/>
<dbReference type="CTD" id="177112"/>
<dbReference type="WormBase" id="Y37E11C.1a">
    <molecule id="Q01630-1"/>
    <property type="protein sequence ID" value="CE21557"/>
    <property type="gene ID" value="WBGene00006769"/>
    <property type="gene designation" value="unc-33"/>
</dbReference>
<dbReference type="WormBase" id="Y37E11C.1b">
    <molecule id="Q01630-2"/>
    <property type="protein sequence ID" value="CE31638"/>
    <property type="gene ID" value="WBGene00006769"/>
    <property type="gene designation" value="unc-33"/>
</dbReference>
<dbReference type="eggNOG" id="KOG2584">
    <property type="taxonomic scope" value="Eukaryota"/>
</dbReference>
<dbReference type="HOGENOM" id="CLU_015572_7_0_1"/>
<dbReference type="InParanoid" id="Q01630"/>
<dbReference type="OMA" id="QQGTKYY"/>
<dbReference type="OrthoDB" id="10258955at2759"/>
<dbReference type="PhylomeDB" id="Q01630"/>
<dbReference type="Reactome" id="R-CEL-399956">
    <property type="pathway name" value="CRMPs in Sema3A signaling"/>
</dbReference>
<dbReference type="PRO" id="PR:Q01630"/>
<dbReference type="Proteomes" id="UP000001940">
    <property type="component" value="Chromosome IV"/>
</dbReference>
<dbReference type="Bgee" id="WBGene00006769">
    <property type="expression patterns" value="Expressed in pharyngeal muscle cell (C elegans) and 3 other cell types or tissues"/>
</dbReference>
<dbReference type="ExpressionAtlas" id="Q01630">
    <property type="expression patterns" value="baseline and differential"/>
</dbReference>
<dbReference type="GO" id="GO:0030424">
    <property type="term" value="C:axon"/>
    <property type="evidence" value="ECO:0007669"/>
    <property type="project" value="UniProtKB-SubCell"/>
</dbReference>
<dbReference type="GO" id="GO:0005829">
    <property type="term" value="C:cytosol"/>
    <property type="evidence" value="ECO:0000318"/>
    <property type="project" value="GO_Central"/>
</dbReference>
<dbReference type="GO" id="GO:0030425">
    <property type="term" value="C:dendrite"/>
    <property type="evidence" value="ECO:0007669"/>
    <property type="project" value="UniProtKB-SubCell"/>
</dbReference>
<dbReference type="GO" id="GO:0043005">
    <property type="term" value="C:neuron projection"/>
    <property type="evidence" value="ECO:0000314"/>
    <property type="project" value="WormBase"/>
</dbReference>
<dbReference type="GO" id="GO:0004157">
    <property type="term" value="F:dihydropyrimidinase activity"/>
    <property type="evidence" value="ECO:0000318"/>
    <property type="project" value="GO_Central"/>
</dbReference>
<dbReference type="GO" id="GO:0031005">
    <property type="term" value="F:filamin binding"/>
    <property type="evidence" value="ECO:0000353"/>
    <property type="project" value="WormBase"/>
</dbReference>
<dbReference type="GO" id="GO:0046982">
    <property type="term" value="F:protein heterodimerization activity"/>
    <property type="evidence" value="ECO:0000315"/>
    <property type="project" value="UniProtKB"/>
</dbReference>
<dbReference type="GO" id="GO:0042803">
    <property type="term" value="F:protein homodimerization activity"/>
    <property type="evidence" value="ECO:0000315"/>
    <property type="project" value="UniProtKB"/>
</dbReference>
<dbReference type="GO" id="GO:0007411">
    <property type="term" value="P:axon guidance"/>
    <property type="evidence" value="ECO:0000315"/>
    <property type="project" value="WormBase"/>
</dbReference>
<dbReference type="GO" id="GO:0061643">
    <property type="term" value="P:chemorepulsion of axon"/>
    <property type="evidence" value="ECO:0000315"/>
    <property type="project" value="UniProtKB"/>
</dbReference>
<dbReference type="GO" id="GO:0030950">
    <property type="term" value="P:establishment or maintenance of actin cytoskeleton polarity"/>
    <property type="evidence" value="ECO:0000315"/>
    <property type="project" value="UniProtKB"/>
</dbReference>
<dbReference type="GO" id="GO:0030951">
    <property type="term" value="P:establishment or maintenance of microtubule cytoskeleton polarity"/>
    <property type="evidence" value="ECO:0000315"/>
    <property type="project" value="UniProtKB"/>
</dbReference>
<dbReference type="GO" id="GO:0008045">
    <property type="term" value="P:motor neuron axon guidance"/>
    <property type="evidence" value="ECO:0000315"/>
    <property type="project" value="UniProtKB"/>
</dbReference>
<dbReference type="GO" id="GO:0031115">
    <property type="term" value="P:negative regulation of microtubule polymerization"/>
    <property type="evidence" value="ECO:0000315"/>
    <property type="project" value="UniProtKB"/>
</dbReference>
<dbReference type="GO" id="GO:0038007">
    <property type="term" value="P:netrin-activated signaling pathway"/>
    <property type="evidence" value="ECO:0000315"/>
    <property type="project" value="UniProtKB"/>
</dbReference>
<dbReference type="GO" id="GO:0006208">
    <property type="term" value="P:pyrimidine nucleobase catabolic process"/>
    <property type="evidence" value="ECO:0000318"/>
    <property type="project" value="GO_Central"/>
</dbReference>
<dbReference type="GO" id="GO:0030334">
    <property type="term" value="P:regulation of cell migration"/>
    <property type="evidence" value="ECO:0000315"/>
    <property type="project" value="UniProtKB"/>
</dbReference>
<dbReference type="GO" id="GO:1905815">
    <property type="term" value="P:regulation of dorsal/ventral axon guidance"/>
    <property type="evidence" value="ECO:0000315"/>
    <property type="project" value="UniProtKB"/>
</dbReference>
<dbReference type="GO" id="GO:0097374">
    <property type="term" value="P:sensory neuron axon guidance"/>
    <property type="evidence" value="ECO:0000315"/>
    <property type="project" value="UniProtKB"/>
</dbReference>
<dbReference type="FunFam" id="3.20.20.140:FF:000173">
    <property type="entry name" value="Protein unc-33"/>
    <property type="match status" value="1"/>
</dbReference>
<dbReference type="Gene3D" id="3.20.20.140">
    <property type="entry name" value="Metal-dependent hydrolases"/>
    <property type="match status" value="1"/>
</dbReference>
<dbReference type="Gene3D" id="2.30.40.10">
    <property type="entry name" value="Urease, subunit C, domain 1"/>
    <property type="match status" value="1"/>
</dbReference>
<dbReference type="InterPro" id="IPR006680">
    <property type="entry name" value="Amidohydro-rel"/>
</dbReference>
<dbReference type="InterPro" id="IPR011059">
    <property type="entry name" value="Metal-dep_hydrolase_composite"/>
</dbReference>
<dbReference type="InterPro" id="IPR032466">
    <property type="entry name" value="Metal_Hydrolase"/>
</dbReference>
<dbReference type="InterPro" id="IPR050378">
    <property type="entry name" value="Metallo-dep_Hydrolases_sf"/>
</dbReference>
<dbReference type="PANTHER" id="PTHR11647">
    <property type="entry name" value="HYDRANTOINASE/DIHYDROPYRIMIDINASE FAMILY MEMBER"/>
    <property type="match status" value="1"/>
</dbReference>
<dbReference type="PANTHER" id="PTHR11647:SF74">
    <property type="entry name" value="PROTEIN UNC-33"/>
    <property type="match status" value="1"/>
</dbReference>
<dbReference type="Pfam" id="PF01979">
    <property type="entry name" value="Amidohydro_1"/>
    <property type="match status" value="1"/>
</dbReference>
<dbReference type="SUPFAM" id="SSF51338">
    <property type="entry name" value="Composite domain of metallo-dependent hydrolases"/>
    <property type="match status" value="1"/>
</dbReference>
<dbReference type="SUPFAM" id="SSF51556">
    <property type="entry name" value="Metallo-dependent hydrolases"/>
    <property type="match status" value="1"/>
</dbReference>